<feature type="signal peptide">
    <location>
        <begin position="1"/>
        <end position="23"/>
    </location>
</feature>
<feature type="chain" id="PRO_0000020184" description="Outer membrane p25">
    <location>
        <begin position="24"/>
        <end position="193"/>
    </location>
</feature>
<reference key="1">
    <citation type="journal article" date="1995" name="Gene">
        <title>Characterization of the Pasteurella multocida skp and firA genes.</title>
        <authorList>
            <person name="Delamarche C."/>
            <person name="Manoha F."/>
            <person name="Behar G."/>
            <person name="Houlgatte R."/>
            <person name="Hellman U."/>
            <person name="Wroblewski H."/>
        </authorList>
    </citation>
    <scope>NUCLEOTIDE SEQUENCE [GENOMIC DNA]</scope>
    <scope>PARTIAL PROTEIN SEQUENCE</scope>
    <source>
        <strain>9222</strain>
    </source>
</reference>
<reference key="2">
    <citation type="journal article" date="2001" name="Proc. Natl. Acad. Sci. U.S.A.">
        <title>Complete genomic sequence of Pasteurella multocida Pm70.</title>
        <authorList>
            <person name="May B.J."/>
            <person name="Zhang Q."/>
            <person name="Li L.L."/>
            <person name="Paustian M.L."/>
            <person name="Whittam T.S."/>
            <person name="Kapur V."/>
        </authorList>
    </citation>
    <scope>NUCLEOTIDE SEQUENCE [LARGE SCALE GENOMIC DNA]</scope>
    <source>
        <strain>Pm70</strain>
    </source>
</reference>
<protein>
    <recommendedName>
        <fullName>Outer membrane p25</fullName>
    </recommendedName>
    <alternativeName>
        <fullName>p28</fullName>
    </alternativeName>
</protein>
<dbReference type="EMBL" id="X74357">
    <property type="protein sequence ID" value="CAA52400.1"/>
    <property type="molecule type" value="Genomic_DNA"/>
</dbReference>
<dbReference type="EMBL" id="AE004439">
    <property type="protein sequence ID" value="AAK04077.1"/>
    <property type="molecule type" value="Genomic_DNA"/>
</dbReference>
<dbReference type="PIR" id="S47341">
    <property type="entry name" value="S47341"/>
</dbReference>
<dbReference type="RefSeq" id="WP_005719521.1">
    <property type="nucleotide sequence ID" value="NC_002663.1"/>
</dbReference>
<dbReference type="SMR" id="Q51922"/>
<dbReference type="STRING" id="272843.PM1993"/>
<dbReference type="EnsemblBacteria" id="AAK04077">
    <property type="protein sequence ID" value="AAK04077"/>
    <property type="gene ID" value="PM1993"/>
</dbReference>
<dbReference type="KEGG" id="pmu:PM1993"/>
<dbReference type="HOGENOM" id="CLU_101388_2_0_6"/>
<dbReference type="OrthoDB" id="5689656at2"/>
<dbReference type="Proteomes" id="UP000000809">
    <property type="component" value="Chromosome"/>
</dbReference>
<dbReference type="GO" id="GO:0009279">
    <property type="term" value="C:cell outer membrane"/>
    <property type="evidence" value="ECO:0007669"/>
    <property type="project" value="UniProtKB-SubCell"/>
</dbReference>
<dbReference type="GO" id="GO:0005829">
    <property type="term" value="C:cytosol"/>
    <property type="evidence" value="ECO:0007669"/>
    <property type="project" value="TreeGrafter"/>
</dbReference>
<dbReference type="GO" id="GO:0051082">
    <property type="term" value="F:unfolded protein binding"/>
    <property type="evidence" value="ECO:0007669"/>
    <property type="project" value="InterPro"/>
</dbReference>
<dbReference type="GO" id="GO:0061077">
    <property type="term" value="P:chaperone-mediated protein folding"/>
    <property type="evidence" value="ECO:0007669"/>
    <property type="project" value="TreeGrafter"/>
</dbReference>
<dbReference type="GO" id="GO:0050821">
    <property type="term" value="P:protein stabilization"/>
    <property type="evidence" value="ECO:0007669"/>
    <property type="project" value="TreeGrafter"/>
</dbReference>
<dbReference type="Gene3D" id="3.30.910.20">
    <property type="entry name" value="Skp domain"/>
    <property type="match status" value="1"/>
</dbReference>
<dbReference type="InterPro" id="IPR005632">
    <property type="entry name" value="Chaperone_Skp"/>
</dbReference>
<dbReference type="InterPro" id="IPR024930">
    <property type="entry name" value="Skp_dom_sf"/>
</dbReference>
<dbReference type="PANTHER" id="PTHR35089">
    <property type="entry name" value="CHAPERONE PROTEIN SKP"/>
    <property type="match status" value="1"/>
</dbReference>
<dbReference type="PANTHER" id="PTHR35089:SF1">
    <property type="entry name" value="CHAPERONE PROTEIN SKP"/>
    <property type="match status" value="1"/>
</dbReference>
<dbReference type="Pfam" id="PF03938">
    <property type="entry name" value="OmpH"/>
    <property type="match status" value="1"/>
</dbReference>
<dbReference type="PIRSF" id="PIRSF002094">
    <property type="entry name" value="OMP26_Skp"/>
    <property type="match status" value="1"/>
</dbReference>
<dbReference type="SMART" id="SM00935">
    <property type="entry name" value="OmpH"/>
    <property type="match status" value="1"/>
</dbReference>
<dbReference type="SUPFAM" id="SSF111384">
    <property type="entry name" value="OmpH-like"/>
    <property type="match status" value="1"/>
</dbReference>
<sequence>MKKAVKVTALSLALAFTSSLAMATENIAFISGDYLFQNHPDRKMVAEKLESEFKARVEKLTANKKSIDEKIAASQKKVEAKVAALQKDAPKLRSADIKKREEEINKLGNSEQEAINKLVTAHDEEVSKYQDDYAKREREETAKLVDSIQNAVNTVAREKNYTLVLNEGAVVFAADAKNITEDVLKVIPATQAK</sequence>
<organism>
    <name type="scientific">Pasteurella multocida (strain Pm70)</name>
    <dbReference type="NCBI Taxonomy" id="272843"/>
    <lineage>
        <taxon>Bacteria</taxon>
        <taxon>Pseudomonadati</taxon>
        <taxon>Pseudomonadota</taxon>
        <taxon>Gammaproteobacteria</taxon>
        <taxon>Pasteurellales</taxon>
        <taxon>Pasteurellaceae</taxon>
        <taxon>Pasteurella</taxon>
    </lineage>
</organism>
<keyword id="KW-0998">Cell outer membrane</keyword>
<keyword id="KW-0903">Direct protein sequencing</keyword>
<keyword id="KW-0472">Membrane</keyword>
<keyword id="KW-1185">Reference proteome</keyword>
<keyword id="KW-0732">Signal</keyword>
<name>OM25_PASMU</name>
<accession>Q51922</accession>
<gene>
    <name type="primary">skp</name>
    <name type="ordered locus">PM1993</name>
</gene>
<comment type="subcellular location">
    <subcellularLocation>
        <location>Cell outer membrane</location>
    </subcellularLocation>
</comment>
<comment type="similarity">
    <text evidence="1">Belongs to the Skp family.</text>
</comment>
<evidence type="ECO:0000305" key="1"/>
<proteinExistence type="evidence at protein level"/>